<sequence>MGKIIGIDLGTTNSCVAIMDGTTARVLENAEGDRTTPSIIAYTQDGETLVGQPAKRQAVTNPQNTLFAIKRLIGRRFQDEEVQRDEAIMPYKIIGADNGDAWIDVKGQKMAPPQISAEVLKKMKKTAEDYLGEPVTEAVITVPAYFNDAQRQATKDAGRIAGLEVKRIINEPTAAALAYGLDKEVGNRTIAVYDLGGGTFDISIIEIDEVDGEKTFEVLATNGDTHLGGEDFDSRMINYLVDEFKKDQGIDLRNDPLAMQRLKEAAEKAKIELSSAQQTDVNLPYITADASGPKHMNIKVTRAKLESLVEDLVNRSIEPLKVALQDAGLSVSDIQDVILVGGQTRMPMVQKKVAEFFGKEPRKDVNPDEAVAIGAAVQGGVLTGEVKDVLLLDVTPLSLGIETMGGVMTALISKNTTIPTKHSQVFSTAEDNQSAVTIHVLQGERKRAADNKDLGQFNLDGISPAPRGMPQIEVTFDIDADGILHVSAKDKNSGKEQKITIKASSGLNEEEIQKMVREAEANAESDRKFEELVQTRNQGDHLLHSTRKQVEEAGDQLPADDKTAIETALSALETSLKGEDKADIEAKMQELAQASQKLMEIAQQQHAQQQAGAAGADASQNHAKDDDVVDAEFEEVKDKK</sequence>
<proteinExistence type="inferred from homology"/>
<reference key="1">
    <citation type="journal article" date="2010" name="PLoS Genet.">
        <title>Genome sequence of the plant growth promoting endophytic bacterium Enterobacter sp. 638.</title>
        <authorList>
            <person name="Taghavi S."/>
            <person name="van der Lelie D."/>
            <person name="Hoffman A."/>
            <person name="Zhang Y.B."/>
            <person name="Walla M.D."/>
            <person name="Vangronsveld J."/>
            <person name="Newman L."/>
            <person name="Monchy S."/>
        </authorList>
    </citation>
    <scope>NUCLEOTIDE SEQUENCE [LARGE SCALE GENOMIC DNA]</scope>
    <source>
        <strain>638</strain>
    </source>
</reference>
<feature type="chain" id="PRO_1000059557" description="Chaperone protein DnaK">
    <location>
        <begin position="1"/>
        <end position="640"/>
    </location>
</feature>
<feature type="region of interest" description="Disordered" evidence="2">
    <location>
        <begin position="600"/>
        <end position="640"/>
    </location>
</feature>
<feature type="compositionally biased region" description="Low complexity" evidence="2">
    <location>
        <begin position="602"/>
        <end position="620"/>
    </location>
</feature>
<feature type="modified residue" description="Phosphothreonine; by autocatalysis" evidence="1">
    <location>
        <position position="199"/>
    </location>
</feature>
<dbReference type="EMBL" id="CP000653">
    <property type="protein sequence ID" value="ABP59265.1"/>
    <property type="molecule type" value="Genomic_DNA"/>
</dbReference>
<dbReference type="RefSeq" id="WP_012015987.1">
    <property type="nucleotide sequence ID" value="NC_009436.1"/>
</dbReference>
<dbReference type="SMR" id="A4W6D5"/>
<dbReference type="STRING" id="399742.Ent638_0578"/>
<dbReference type="KEGG" id="ent:Ent638_0578"/>
<dbReference type="eggNOG" id="COG0443">
    <property type="taxonomic scope" value="Bacteria"/>
</dbReference>
<dbReference type="HOGENOM" id="CLU_005965_2_1_6"/>
<dbReference type="OrthoDB" id="9766019at2"/>
<dbReference type="Proteomes" id="UP000000230">
    <property type="component" value="Chromosome"/>
</dbReference>
<dbReference type="GO" id="GO:0005524">
    <property type="term" value="F:ATP binding"/>
    <property type="evidence" value="ECO:0007669"/>
    <property type="project" value="UniProtKB-UniRule"/>
</dbReference>
<dbReference type="GO" id="GO:0140662">
    <property type="term" value="F:ATP-dependent protein folding chaperone"/>
    <property type="evidence" value="ECO:0007669"/>
    <property type="project" value="InterPro"/>
</dbReference>
<dbReference type="GO" id="GO:0051082">
    <property type="term" value="F:unfolded protein binding"/>
    <property type="evidence" value="ECO:0007669"/>
    <property type="project" value="InterPro"/>
</dbReference>
<dbReference type="CDD" id="cd10234">
    <property type="entry name" value="ASKHA_NBD_HSP70_DnaK-like"/>
    <property type="match status" value="1"/>
</dbReference>
<dbReference type="FunFam" id="2.60.34.10:FF:000014">
    <property type="entry name" value="Chaperone protein DnaK HSP70"/>
    <property type="match status" value="1"/>
</dbReference>
<dbReference type="FunFam" id="1.20.1270.10:FF:000001">
    <property type="entry name" value="Molecular chaperone DnaK"/>
    <property type="match status" value="1"/>
</dbReference>
<dbReference type="FunFam" id="3.30.420.40:FF:000004">
    <property type="entry name" value="Molecular chaperone DnaK"/>
    <property type="match status" value="1"/>
</dbReference>
<dbReference type="FunFam" id="3.90.640.10:FF:000003">
    <property type="entry name" value="Molecular chaperone DnaK"/>
    <property type="match status" value="1"/>
</dbReference>
<dbReference type="Gene3D" id="1.20.1270.10">
    <property type="match status" value="1"/>
</dbReference>
<dbReference type="Gene3D" id="3.30.420.40">
    <property type="match status" value="2"/>
</dbReference>
<dbReference type="Gene3D" id="3.90.640.10">
    <property type="entry name" value="Actin, Chain A, domain 4"/>
    <property type="match status" value="1"/>
</dbReference>
<dbReference type="Gene3D" id="2.60.34.10">
    <property type="entry name" value="Substrate Binding Domain Of DNAk, Chain A, domain 1"/>
    <property type="match status" value="1"/>
</dbReference>
<dbReference type="HAMAP" id="MF_00332">
    <property type="entry name" value="DnaK"/>
    <property type="match status" value="1"/>
</dbReference>
<dbReference type="InterPro" id="IPR043129">
    <property type="entry name" value="ATPase_NBD"/>
</dbReference>
<dbReference type="InterPro" id="IPR012725">
    <property type="entry name" value="Chaperone_DnaK"/>
</dbReference>
<dbReference type="InterPro" id="IPR018181">
    <property type="entry name" value="Heat_shock_70_CS"/>
</dbReference>
<dbReference type="InterPro" id="IPR029048">
    <property type="entry name" value="HSP70_C_sf"/>
</dbReference>
<dbReference type="InterPro" id="IPR029047">
    <property type="entry name" value="HSP70_peptide-bd_sf"/>
</dbReference>
<dbReference type="InterPro" id="IPR013126">
    <property type="entry name" value="Hsp_70_fam"/>
</dbReference>
<dbReference type="NCBIfam" id="NF001413">
    <property type="entry name" value="PRK00290.1"/>
    <property type="match status" value="1"/>
</dbReference>
<dbReference type="NCBIfam" id="NF003520">
    <property type="entry name" value="PRK05183.1"/>
    <property type="match status" value="1"/>
</dbReference>
<dbReference type="NCBIfam" id="TIGR02350">
    <property type="entry name" value="prok_dnaK"/>
    <property type="match status" value="1"/>
</dbReference>
<dbReference type="PANTHER" id="PTHR19375">
    <property type="entry name" value="HEAT SHOCK PROTEIN 70KDA"/>
    <property type="match status" value="1"/>
</dbReference>
<dbReference type="Pfam" id="PF00012">
    <property type="entry name" value="HSP70"/>
    <property type="match status" value="1"/>
</dbReference>
<dbReference type="PRINTS" id="PR00301">
    <property type="entry name" value="HEATSHOCK70"/>
</dbReference>
<dbReference type="SUPFAM" id="SSF53067">
    <property type="entry name" value="Actin-like ATPase domain"/>
    <property type="match status" value="2"/>
</dbReference>
<dbReference type="SUPFAM" id="SSF100934">
    <property type="entry name" value="Heat shock protein 70kD (HSP70), C-terminal subdomain"/>
    <property type="match status" value="1"/>
</dbReference>
<dbReference type="SUPFAM" id="SSF100920">
    <property type="entry name" value="Heat shock protein 70kD (HSP70), peptide-binding domain"/>
    <property type="match status" value="1"/>
</dbReference>
<dbReference type="PROSITE" id="PS00297">
    <property type="entry name" value="HSP70_1"/>
    <property type="match status" value="1"/>
</dbReference>
<dbReference type="PROSITE" id="PS00329">
    <property type="entry name" value="HSP70_2"/>
    <property type="match status" value="1"/>
</dbReference>
<dbReference type="PROSITE" id="PS01036">
    <property type="entry name" value="HSP70_3"/>
    <property type="match status" value="1"/>
</dbReference>
<comment type="function">
    <text evidence="1">Acts as a chaperone.</text>
</comment>
<comment type="induction">
    <text evidence="1">By stress conditions e.g. heat shock.</text>
</comment>
<comment type="similarity">
    <text evidence="1">Belongs to the heat shock protein 70 family.</text>
</comment>
<name>DNAK_ENT38</name>
<organism>
    <name type="scientific">Enterobacter sp. (strain 638)</name>
    <dbReference type="NCBI Taxonomy" id="399742"/>
    <lineage>
        <taxon>Bacteria</taxon>
        <taxon>Pseudomonadati</taxon>
        <taxon>Pseudomonadota</taxon>
        <taxon>Gammaproteobacteria</taxon>
        <taxon>Enterobacterales</taxon>
        <taxon>Enterobacteriaceae</taxon>
        <taxon>Enterobacter</taxon>
    </lineage>
</organism>
<evidence type="ECO:0000255" key="1">
    <source>
        <dbReference type="HAMAP-Rule" id="MF_00332"/>
    </source>
</evidence>
<evidence type="ECO:0000256" key="2">
    <source>
        <dbReference type="SAM" id="MobiDB-lite"/>
    </source>
</evidence>
<protein>
    <recommendedName>
        <fullName evidence="1">Chaperone protein DnaK</fullName>
    </recommendedName>
    <alternativeName>
        <fullName evidence="1">HSP70</fullName>
    </alternativeName>
    <alternativeName>
        <fullName evidence="1">Heat shock 70 kDa protein</fullName>
    </alternativeName>
    <alternativeName>
        <fullName evidence="1">Heat shock protein 70</fullName>
    </alternativeName>
</protein>
<keyword id="KW-0067">ATP-binding</keyword>
<keyword id="KW-0143">Chaperone</keyword>
<keyword id="KW-0547">Nucleotide-binding</keyword>
<keyword id="KW-0597">Phosphoprotein</keyword>
<keyword id="KW-0346">Stress response</keyword>
<gene>
    <name evidence="1" type="primary">dnaK</name>
    <name type="ordered locus">Ent638_0578</name>
</gene>
<accession>A4W6D5</accession>